<dbReference type="EMBL" id="X55891">
    <property type="protein sequence ID" value="CAA39375.1"/>
    <property type="molecule type" value="Genomic_DNA"/>
</dbReference>
<dbReference type="EMBL" id="Z75114">
    <property type="protein sequence ID" value="CAA99421.1"/>
    <property type="molecule type" value="Genomic_DNA"/>
</dbReference>
<dbReference type="EMBL" id="BK006948">
    <property type="protein sequence ID" value="DAA10978.1"/>
    <property type="molecule type" value="Genomic_DNA"/>
</dbReference>
<dbReference type="PIR" id="S67098">
    <property type="entry name" value="S67098"/>
</dbReference>
<dbReference type="RefSeq" id="NP_014849.3">
    <property type="nucleotide sequence ID" value="NM_001183625.3"/>
</dbReference>
<dbReference type="PDB" id="7NAC">
    <property type="method" value="EM"/>
    <property type="resolution" value="3.04 A"/>
    <property type="chains" value="8=1-710"/>
</dbReference>
<dbReference type="PDB" id="7NAD">
    <property type="method" value="EM"/>
    <property type="resolution" value="3.04 A"/>
    <property type="chains" value="8=1-710"/>
</dbReference>
<dbReference type="PDB" id="7NAF">
    <property type="method" value="EM"/>
    <property type="resolution" value="3.13 A"/>
    <property type="chains" value="8=3-41"/>
</dbReference>
<dbReference type="PDB" id="7R6K">
    <property type="method" value="EM"/>
    <property type="resolution" value="3.17 A"/>
    <property type="chains" value="8=1-710"/>
</dbReference>
<dbReference type="PDB" id="7R72">
    <property type="method" value="EM"/>
    <property type="resolution" value="3.07 A"/>
    <property type="chains" value="8=1-710"/>
</dbReference>
<dbReference type="PDB" id="7R7A">
    <property type="method" value="EM"/>
    <property type="resolution" value="3.04 A"/>
    <property type="chains" value="8=1-710"/>
</dbReference>
<dbReference type="PDB" id="8E5T">
    <property type="method" value="EM"/>
    <property type="resolution" value="4.00 A"/>
    <property type="chains" value="6=1-710"/>
</dbReference>
<dbReference type="PDB" id="8V87">
    <property type="method" value="EM"/>
    <property type="resolution" value="2.66 A"/>
    <property type="chains" value="8=1-710"/>
</dbReference>
<dbReference type="PDBsum" id="7NAC"/>
<dbReference type="PDBsum" id="7NAD"/>
<dbReference type="PDBsum" id="7NAF"/>
<dbReference type="PDBsum" id="7R6K"/>
<dbReference type="PDBsum" id="7R72"/>
<dbReference type="PDBsum" id="7R7A"/>
<dbReference type="PDBsum" id="8E5T"/>
<dbReference type="PDBsum" id="8V87"/>
<dbReference type="EMDB" id="EMD-24271"/>
<dbReference type="EMDB" id="EMD-24280"/>
<dbReference type="EMDB" id="EMD-24290"/>
<dbReference type="EMDB" id="EMD-24296"/>
<dbReference type="EMDB" id="EMD-43027"/>
<dbReference type="SMR" id="P39744"/>
<dbReference type="BioGRID" id="34601">
    <property type="interactions" value="212"/>
</dbReference>
<dbReference type="ComplexPortal" id="CPX-1733">
    <property type="entry name" value="NOC1-NOC2 pre-ribosome maturation complex"/>
</dbReference>
<dbReference type="ComplexPortal" id="CPX-1734">
    <property type="entry name" value="NOC2-NOC3 pre-ribosome maturation complex"/>
</dbReference>
<dbReference type="DIP" id="DIP-4559N"/>
<dbReference type="FunCoup" id="P39744">
    <property type="interactions" value="1270"/>
</dbReference>
<dbReference type="IntAct" id="P39744">
    <property type="interactions" value="83"/>
</dbReference>
<dbReference type="MINT" id="P39744"/>
<dbReference type="STRING" id="4932.YOR206W"/>
<dbReference type="iPTMnet" id="P39744"/>
<dbReference type="PaxDb" id="4932-YOR206W"/>
<dbReference type="PeptideAtlas" id="P39744"/>
<dbReference type="EnsemblFungi" id="YOR206W_mRNA">
    <property type="protein sequence ID" value="YOR206W"/>
    <property type="gene ID" value="YOR206W"/>
</dbReference>
<dbReference type="GeneID" id="854381"/>
<dbReference type="KEGG" id="sce:YOR206W"/>
<dbReference type="AGR" id="SGD:S000005732"/>
<dbReference type="SGD" id="S000005732">
    <property type="gene designation" value="NOC2"/>
</dbReference>
<dbReference type="VEuPathDB" id="FungiDB:YOR206W"/>
<dbReference type="eggNOG" id="KOG2256">
    <property type="taxonomic scope" value="Eukaryota"/>
</dbReference>
<dbReference type="GeneTree" id="ENSGT00390000010057"/>
<dbReference type="HOGENOM" id="CLU_011272_0_0_1"/>
<dbReference type="InParanoid" id="P39744"/>
<dbReference type="OMA" id="GCLRYYL"/>
<dbReference type="OrthoDB" id="10266662at2759"/>
<dbReference type="BioCyc" id="YEAST:G3O-33710-MONOMER"/>
<dbReference type="BioGRID-ORCS" id="854381">
    <property type="hits" value="7 hits in 10 CRISPR screens"/>
</dbReference>
<dbReference type="CD-CODE" id="BDAE0F88">
    <property type="entry name" value="Nucleolus"/>
</dbReference>
<dbReference type="PRO" id="PR:P39744"/>
<dbReference type="Proteomes" id="UP000002311">
    <property type="component" value="Chromosome XV"/>
</dbReference>
<dbReference type="RNAct" id="P39744">
    <property type="molecule type" value="protein"/>
</dbReference>
<dbReference type="GO" id="GO:0005739">
    <property type="term" value="C:mitochondrion"/>
    <property type="evidence" value="ECO:0007005"/>
    <property type="project" value="SGD"/>
</dbReference>
<dbReference type="GO" id="GO:0030690">
    <property type="term" value="C:Noc1p-Noc2p complex"/>
    <property type="evidence" value="ECO:0000314"/>
    <property type="project" value="SGD"/>
</dbReference>
<dbReference type="GO" id="GO:0030691">
    <property type="term" value="C:Noc2p-Noc3p complex"/>
    <property type="evidence" value="ECO:0000314"/>
    <property type="project" value="SGD"/>
</dbReference>
<dbReference type="GO" id="GO:0005730">
    <property type="term" value="C:nucleolus"/>
    <property type="evidence" value="ECO:0000314"/>
    <property type="project" value="ComplexPortal"/>
</dbReference>
<dbReference type="GO" id="GO:0005654">
    <property type="term" value="C:nucleoplasm"/>
    <property type="evidence" value="ECO:0000314"/>
    <property type="project" value="ComplexPortal"/>
</dbReference>
<dbReference type="GO" id="GO:0005634">
    <property type="term" value="C:nucleus"/>
    <property type="evidence" value="ECO:0000314"/>
    <property type="project" value="SGD"/>
</dbReference>
<dbReference type="GO" id="GO:0030687">
    <property type="term" value="C:preribosome, large subunit precursor"/>
    <property type="evidence" value="ECO:0000314"/>
    <property type="project" value="SGD"/>
</dbReference>
<dbReference type="GO" id="GO:0003729">
    <property type="term" value="F:mRNA binding"/>
    <property type="evidence" value="ECO:0007005"/>
    <property type="project" value="SGD"/>
</dbReference>
<dbReference type="GO" id="GO:0042273">
    <property type="term" value="P:ribosomal large subunit biogenesis"/>
    <property type="evidence" value="ECO:0000314"/>
    <property type="project" value="ComplexPortal"/>
</dbReference>
<dbReference type="InterPro" id="IPR005343">
    <property type="entry name" value="Noc2"/>
</dbReference>
<dbReference type="PANTHER" id="PTHR12687">
    <property type="entry name" value="NUCLEOLAR COMPLEX 2 AND RAD4-RELATED"/>
    <property type="match status" value="1"/>
</dbReference>
<dbReference type="PANTHER" id="PTHR12687:SF4">
    <property type="entry name" value="NUCLEOLAR COMPLEX PROTEIN 2 HOMOLOG"/>
    <property type="match status" value="1"/>
</dbReference>
<dbReference type="Pfam" id="PF03715">
    <property type="entry name" value="Noc2"/>
    <property type="match status" value="1"/>
</dbReference>
<protein>
    <recommendedName>
        <fullName>Nucleolar complex protein 2</fullName>
    </recommendedName>
</protein>
<name>NOC2_YEAST</name>
<proteinExistence type="evidence at protein level"/>
<comment type="function">
    <text evidence="2">Involved in the intranuclear transport of ribosomal precursors.</text>
</comment>
<comment type="subunit">
    <text evidence="2">Interacts with MAK21/NOC1 and NOC3. Forms a nucleolar complex with MAK21 that binds to 90S and 66S pre-ribosomes, as well as a nuclear complex with NOC3 that binds to 66S pre-ribosomes.</text>
</comment>
<comment type="interaction">
    <interactant intactId="EBI-29259">
        <id>P39744</id>
    </interactant>
    <interactant intactId="EBI-3775">
        <id>Q08235</id>
        <label>BRX1</label>
    </interactant>
    <organismsDiffer>false</organismsDiffer>
    <experiments>5</experiments>
</comment>
<comment type="interaction">
    <interactant intactId="EBI-29259">
        <id>P39744</id>
    </interactant>
    <interactant intactId="EBI-5644">
        <id>Q12389</id>
        <label>DBP10</label>
    </interactant>
    <organismsDiffer>false</organismsDiffer>
    <experiments>6</experiments>
</comment>
<comment type="interaction">
    <interactant intactId="EBI-29259">
        <id>P39744</id>
    </interactant>
    <interactant intactId="EBI-6170">
        <id>P32892</id>
        <label>DRS1</label>
    </interactant>
    <organismsDiffer>false</organismsDiffer>
    <experiments>3</experiments>
</comment>
<comment type="interaction">
    <interactant intactId="EBI-29259">
        <id>P39744</id>
    </interactant>
    <interactant intactId="EBI-6289">
        <id>P36049</id>
        <label>EBP2</label>
    </interactant>
    <organismsDiffer>false</organismsDiffer>
    <experiments>4</experiments>
</comment>
<comment type="interaction">
    <interactant intactId="EBI-29259">
        <id>P39744</id>
    </interactant>
    <interactant intactId="EBI-28098">
        <id>Q04660</id>
        <label>ERB1</label>
    </interactant>
    <organismsDiffer>false</organismsDiffer>
    <experiments>9</experiments>
</comment>
<comment type="interaction">
    <interactant intactId="EBI-29259">
        <id>P39744</id>
    </interactant>
    <interactant intactId="EBI-6956">
        <id>Q06205</id>
        <label>FPR4</label>
    </interactant>
    <organismsDiffer>false</organismsDiffer>
    <experiments>3</experiments>
</comment>
<comment type="interaction">
    <interactant intactId="EBI-29259">
        <id>P39744</id>
    </interactant>
    <interactant intactId="EBI-8170">
        <id>Q03532</id>
        <label>HAS1</label>
    </interactant>
    <organismsDiffer>false</organismsDiffer>
    <experiments>4</experiments>
</comment>
<comment type="interaction">
    <interactant intactId="EBI-29259">
        <id>P39744</id>
    </interactant>
    <interactant intactId="EBI-22906">
        <id>P43586</id>
        <label>LOC1</label>
    </interactant>
    <organismsDiffer>false</organismsDiffer>
    <experiments>7</experiments>
</comment>
<comment type="interaction">
    <interactant intactId="EBI-29259">
        <id>P39744</id>
    </interactant>
    <interactant intactId="EBI-10937">
        <id>P10962</id>
        <label>MAK16</label>
    </interactant>
    <organismsDiffer>false</organismsDiffer>
    <experiments>3</experiments>
</comment>
<comment type="interaction">
    <interactant intactId="EBI-29259">
        <id>P39744</id>
    </interactant>
    <interactant intactId="EBI-10944">
        <id>Q12176</id>
        <label>MAK21</label>
    </interactant>
    <organismsDiffer>false</organismsDiffer>
    <experiments>9</experiments>
</comment>
<comment type="interaction">
    <interactant intactId="EBI-29259">
        <id>P39744</id>
    </interactant>
    <interactant intactId="EBI-36093">
        <id>Q07896</id>
        <label>NOC3</label>
    </interactant>
    <organismsDiffer>false</organismsDiffer>
    <experiments>8</experiments>
</comment>
<comment type="interaction">
    <interactant intactId="EBI-29259">
        <id>P39744</id>
    </interactant>
    <interactant intactId="EBI-35895">
        <id>Q08208</id>
        <label>NOP12</label>
    </interactant>
    <organismsDiffer>false</organismsDiffer>
    <experiments>4</experiments>
</comment>
<comment type="interaction">
    <interactant intactId="EBI-29259">
        <id>P39744</id>
    </interactant>
    <interactant intactId="EBI-28853">
        <id>P53927</id>
        <label>NOP15</label>
    </interactant>
    <organismsDiffer>false</organismsDiffer>
    <experiments>3</experiments>
</comment>
<comment type="interaction">
    <interactant intactId="EBI-29259">
        <id>P39744</id>
    </interactant>
    <interactant intactId="EBI-12122">
        <id>P37838</id>
        <label>NOP4</label>
    </interactant>
    <organismsDiffer>false</organismsDiffer>
    <experiments>5</experiments>
</comment>
<comment type="interaction">
    <interactant intactId="EBI-29259">
        <id>P39744</id>
    </interactant>
    <interactant intactId="EBI-13145">
        <id>P53261</id>
        <label>NOP7</label>
    </interactant>
    <organismsDiffer>false</organismsDiffer>
    <experiments>4</experiments>
</comment>
<comment type="interaction">
    <interactant intactId="EBI-29259">
        <id>P39744</id>
    </interactant>
    <interactant intactId="EBI-22681">
        <id>P40078</id>
        <label>NSA2</label>
    </interactant>
    <organismsDiffer>false</organismsDiffer>
    <experiments>4</experiments>
</comment>
<comment type="interaction">
    <interactant intactId="EBI-29259">
        <id>P39744</id>
    </interactant>
    <interactant intactId="EBI-15415">
        <id>P40693</id>
        <label>RLP7</label>
    </interactant>
    <organismsDiffer>false</organismsDiffer>
    <experiments>4</experiments>
</comment>
<comment type="interaction">
    <interactant intactId="EBI-29259">
        <id>P39744</id>
    </interactant>
    <interactant intactId="EBI-24614">
        <id>P38805</id>
        <label>RPF1</label>
    </interactant>
    <organismsDiffer>false</organismsDiffer>
    <experiments>4</experiments>
</comment>
<comment type="interaction">
    <interactant intactId="EBI-29259">
        <id>P39744</id>
    </interactant>
    <interactant intactId="EBI-15881">
        <id>P36160</id>
        <label>RPF2</label>
    </interactant>
    <organismsDiffer>false</organismsDiffer>
    <experiments>7</experiments>
</comment>
<comment type="interaction">
    <interactant intactId="EBI-29259">
        <id>P39744</id>
    </interactant>
    <interactant intactId="EBI-16002">
        <id>P35178</id>
        <label>RRP1</label>
    </interactant>
    <organismsDiffer>false</organismsDiffer>
    <experiments>4</experiments>
</comment>
<comment type="interaction">
    <interactant intactId="EBI-29259">
        <id>P39744</id>
    </interactant>
    <interactant intactId="EBI-26762">
        <id>P36080</id>
        <label>RRP14</label>
    </interactant>
    <organismsDiffer>false</organismsDiffer>
    <experiments>3</experiments>
</comment>
<comment type="interaction">
    <interactant intactId="EBI-29259">
        <id>P39744</id>
    </interactant>
    <interactant intactId="EBI-16011">
        <id>Q05022</id>
        <label>RRP5</label>
    </interactant>
    <organismsDiffer>false</organismsDiffer>
    <experiments>5</experiments>
</comment>
<comment type="interaction">
    <interactant intactId="EBI-29259">
        <id>P39744</id>
    </interactant>
    <interactant intactId="EBI-16026">
        <id>Q08746</id>
        <label>RRS1</label>
    </interactant>
    <organismsDiffer>false</organismsDiffer>
    <experiments>3</experiments>
</comment>
<comment type="interaction">
    <interactant intactId="EBI-29259">
        <id>P39744</id>
    </interactant>
    <interactant intactId="EBI-17814">
        <id>P25582</id>
        <label>SPB1</label>
    </interactant>
    <organismsDiffer>false</organismsDiffer>
    <experiments>3</experiments>
</comment>
<comment type="subcellular location">
    <subcellularLocation>
        <location evidence="2">Nucleus</location>
        <location evidence="2">Nucleolus</location>
    </subcellularLocation>
</comment>
<comment type="miscellaneous">
    <text evidence="3">Present with 29000 molecules/cell in log phase SD medium.</text>
</comment>
<comment type="similarity">
    <text evidence="4">Belongs to the NOC2 family.</text>
</comment>
<comment type="caution">
    <text evidence="5">Was originally thought to be RAD4.</text>
</comment>
<organism>
    <name type="scientific">Saccharomyces cerevisiae (strain ATCC 204508 / S288c)</name>
    <name type="common">Baker's yeast</name>
    <dbReference type="NCBI Taxonomy" id="559292"/>
    <lineage>
        <taxon>Eukaryota</taxon>
        <taxon>Fungi</taxon>
        <taxon>Dikarya</taxon>
        <taxon>Ascomycota</taxon>
        <taxon>Saccharomycotina</taxon>
        <taxon>Saccharomycetes</taxon>
        <taxon>Saccharomycetales</taxon>
        <taxon>Saccharomycetaceae</taxon>
        <taxon>Saccharomyces</taxon>
    </lineage>
</organism>
<gene>
    <name type="primary">NOC2</name>
    <name type="ordered locus">YOR206W</name>
    <name type="ORF">YOX001</name>
</gene>
<evidence type="ECO:0000256" key="1">
    <source>
        <dbReference type="SAM" id="MobiDB-lite"/>
    </source>
</evidence>
<evidence type="ECO:0000269" key="2">
    <source>
    </source>
</evidence>
<evidence type="ECO:0000269" key="3">
    <source>
    </source>
</evidence>
<evidence type="ECO:0000305" key="4"/>
<evidence type="ECO:0000305" key="5">
    <source>
    </source>
</evidence>
<evidence type="ECO:0007744" key="6">
    <source>
    </source>
</evidence>
<evidence type="ECO:0007744" key="7">
    <source>
    </source>
</evidence>
<evidence type="ECO:0007744" key="8">
    <source>
    </source>
</evidence>
<evidence type="ECO:0007829" key="9">
    <source>
        <dbReference type="PDB" id="7NAD"/>
    </source>
</evidence>
<evidence type="ECO:0007829" key="10">
    <source>
        <dbReference type="PDB" id="7R6K"/>
    </source>
</evidence>
<keyword id="KW-0002">3D-structure</keyword>
<keyword id="KW-0539">Nucleus</keyword>
<keyword id="KW-0597">Phosphoprotein</keyword>
<keyword id="KW-1185">Reference proteome</keyword>
<keyword id="KW-0690">Ribosome biogenesis</keyword>
<feature type="chain" id="PRO_0000121054" description="Nucleolar complex protein 2">
    <location>
        <begin position="1"/>
        <end position="710"/>
    </location>
</feature>
<feature type="region of interest" description="Disordered" evidence="1">
    <location>
        <begin position="1"/>
        <end position="64"/>
    </location>
</feature>
<feature type="region of interest" description="Disordered" evidence="1">
    <location>
        <begin position="76"/>
        <end position="114"/>
    </location>
</feature>
<feature type="region of interest" description="Disordered" evidence="1">
    <location>
        <begin position="138"/>
        <end position="169"/>
    </location>
</feature>
<feature type="region of interest" description="Disordered" evidence="1">
    <location>
        <begin position="672"/>
        <end position="710"/>
    </location>
</feature>
<feature type="compositionally biased region" description="Basic residues" evidence="1">
    <location>
        <begin position="1"/>
        <end position="17"/>
    </location>
</feature>
<feature type="compositionally biased region" description="Basic residues" evidence="1">
    <location>
        <begin position="25"/>
        <end position="38"/>
    </location>
</feature>
<feature type="compositionally biased region" description="Basic and acidic residues" evidence="1">
    <location>
        <begin position="76"/>
        <end position="85"/>
    </location>
</feature>
<feature type="compositionally biased region" description="Acidic residues" evidence="1">
    <location>
        <begin position="97"/>
        <end position="110"/>
    </location>
</feature>
<feature type="compositionally biased region" description="Basic and acidic residues" evidence="1">
    <location>
        <begin position="156"/>
        <end position="169"/>
    </location>
</feature>
<feature type="compositionally biased region" description="Basic and acidic residues" evidence="1">
    <location>
        <begin position="672"/>
        <end position="691"/>
    </location>
</feature>
<feature type="compositionally biased region" description="Acidic residues" evidence="1">
    <location>
        <begin position="697"/>
        <end position="710"/>
    </location>
</feature>
<feature type="modified residue" description="Phosphoserine" evidence="6 7">
    <location>
        <position position="70"/>
    </location>
</feature>
<feature type="modified residue" description="Phosphoserine" evidence="6 7 8">
    <location>
        <position position="149"/>
    </location>
</feature>
<feature type="modified residue" description="Phosphoserine" evidence="6 8">
    <location>
        <position position="160"/>
    </location>
</feature>
<feature type="modified residue" description="Phosphoserine" evidence="6">
    <location>
        <position position="166"/>
    </location>
</feature>
<feature type="modified residue" description="Phosphoserine" evidence="6 8">
    <location>
        <position position="698"/>
    </location>
</feature>
<feature type="modified residue" description="Phosphoserine" evidence="6 8">
    <location>
        <position position="708"/>
    </location>
</feature>
<feature type="sequence conflict" description="In Ref. 1." evidence="4" ref="1">
    <original>DEGEDAERNSNIEEKSEQMELEKEKIELS</original>
    <variation>MKVKMLKETVILKKNLNKWSWKRKKLSFL</variation>
    <location>
        <begin position="151"/>
        <end position="179"/>
    </location>
</feature>
<feature type="sequence conflict" description="In Ref. 1; CAA39375." evidence="4" ref="1">
    <original>FH</original>
    <variation>LD</variation>
    <location>
        <begin position="231"/>
        <end position="232"/>
    </location>
</feature>
<feature type="sequence conflict" description="In Ref. 1; CAA39375." evidence="4" ref="1">
    <original>E</original>
    <variation>Q</variation>
    <location>
        <position position="333"/>
    </location>
</feature>
<feature type="sequence conflict" description="In Ref. 1; CAA39375." evidence="4" ref="1">
    <original>TTY</original>
    <variation>QRT</variation>
    <location>
        <begin position="360"/>
        <end position="362"/>
    </location>
</feature>
<feature type="sequence conflict" description="In Ref. 1; CAA39375." evidence="4" ref="1">
    <original>D</original>
    <variation>H</variation>
    <location>
        <position position="542"/>
    </location>
</feature>
<feature type="sequence conflict" description="In Ref. 1; CAA39375." evidence="4" ref="1">
    <original>MSDA</original>
    <variation>NVRRLTTQQDLIFCLEFNSIVYKCVNKRKVFFKAYISLCSHVLTCEHSKLSLVSWIFLYFGRFMDRKHVKRSMDLIKSNDVKQGTKMKEVRFTVIKFSKSFNSLKVPHEIDMIANITENFSTRYMISYCWKISSNLNLGAMFMDNNSWNNSFAAYGIVILIIFSALLQVVHQPL</variation>
    <location>
        <begin position="707"/>
        <end position="710"/>
    </location>
</feature>
<feature type="helix" evidence="9">
    <location>
        <begin position="6"/>
        <end position="14"/>
    </location>
</feature>
<feature type="helix" evidence="9">
    <location>
        <begin position="16"/>
        <end position="34"/>
    </location>
</feature>
<feature type="helix" evidence="9">
    <location>
        <begin position="42"/>
        <end position="49"/>
    </location>
</feature>
<feature type="helix" evidence="9">
    <location>
        <begin position="52"/>
        <end position="59"/>
    </location>
</feature>
<feature type="strand" evidence="10">
    <location>
        <begin position="67"/>
        <end position="69"/>
    </location>
</feature>
<feature type="helix" evidence="10">
    <location>
        <begin position="71"/>
        <end position="74"/>
    </location>
</feature>
<feature type="helix" evidence="10">
    <location>
        <begin position="268"/>
        <end position="284"/>
    </location>
</feature>
<feature type="strand" evidence="10">
    <location>
        <begin position="288"/>
        <end position="290"/>
    </location>
</feature>
<feature type="helix" evidence="10">
    <location>
        <begin position="292"/>
        <end position="302"/>
    </location>
</feature>
<feature type="turn" evidence="10">
    <location>
        <begin position="303"/>
        <end position="307"/>
    </location>
</feature>
<feature type="helix" evidence="10">
    <location>
        <begin position="314"/>
        <end position="328"/>
    </location>
</feature>
<feature type="helix" evidence="10">
    <location>
        <begin position="336"/>
        <end position="348"/>
    </location>
</feature>
<feature type="strand" evidence="10">
    <location>
        <begin position="351"/>
        <end position="353"/>
    </location>
</feature>
<feature type="helix" evidence="10">
    <location>
        <begin position="354"/>
        <end position="366"/>
    </location>
</feature>
<feature type="strand" evidence="10">
    <location>
        <begin position="373"/>
        <end position="375"/>
    </location>
</feature>
<feature type="helix" evidence="10">
    <location>
        <begin position="377"/>
        <end position="390"/>
    </location>
</feature>
<feature type="turn" evidence="10">
    <location>
        <begin position="391"/>
        <end position="394"/>
    </location>
</feature>
<feature type="helix" evidence="10">
    <location>
        <begin position="397"/>
        <end position="418"/>
    </location>
</feature>
<feature type="helix" evidence="10">
    <location>
        <begin position="428"/>
        <end position="434"/>
    </location>
</feature>
<feature type="helix" evidence="10">
    <location>
        <begin position="439"/>
        <end position="452"/>
    </location>
</feature>
<feature type="helix" evidence="10">
    <location>
        <begin position="472"/>
        <end position="483"/>
    </location>
</feature>
<feature type="helix" evidence="10">
    <location>
        <begin position="492"/>
        <end position="507"/>
    </location>
</feature>
<feature type="turn" evidence="10">
    <location>
        <begin position="508"/>
        <end position="510"/>
    </location>
</feature>
<feature type="helix" evidence="10">
    <location>
        <begin position="516"/>
        <end position="520"/>
    </location>
</feature>
<feature type="turn" evidence="10">
    <location>
        <begin position="521"/>
        <end position="524"/>
    </location>
</feature>
<feature type="strand" evidence="10">
    <location>
        <begin position="528"/>
        <end position="530"/>
    </location>
</feature>
<feature type="strand" evidence="10">
    <location>
        <begin position="543"/>
        <end position="545"/>
    </location>
</feature>
<feature type="helix" evidence="10">
    <location>
        <begin position="557"/>
        <end position="574"/>
    </location>
</feature>
<feature type="helix" evidence="10">
    <location>
        <begin position="576"/>
        <end position="578"/>
    </location>
</feature>
<feature type="helix" evidence="10">
    <location>
        <begin position="584"/>
        <end position="601"/>
    </location>
</feature>
<feature type="helix" evidence="10">
    <location>
        <begin position="606"/>
        <end position="628"/>
    </location>
</feature>
<feature type="strand" evidence="10">
    <location>
        <begin position="636"/>
        <end position="638"/>
    </location>
</feature>
<feature type="helix" evidence="10">
    <location>
        <begin position="641"/>
        <end position="644"/>
    </location>
</feature>
<feature type="helix" evidence="10">
    <location>
        <begin position="655"/>
        <end position="677"/>
    </location>
</feature>
<accession>P39744</accession>
<accession>D6W2R2</accession>
<accession>Q08625</accession>
<reference key="1">
    <citation type="journal article" date="1990" name="Nucleic Acids Res.">
        <title>Nucleotide sequence of RAD4 gene of Saccharomyces cerevisiae that can be propagated in Escherichia coli without inactivation.</title>
        <authorList>
            <person name="Choi I.S."/>
            <person name="Kim J.B."/>
            <person name="Park S.D."/>
        </authorList>
    </citation>
    <scope>NUCLEOTIDE SEQUENCE [GENOMIC DNA] OF 151-710</scope>
</reference>
<reference key="2">
    <citation type="journal article" date="1997" name="Nature">
        <title>The nucleotide sequence of Saccharomyces cerevisiae chromosome XV.</title>
        <authorList>
            <person name="Dujon B."/>
            <person name="Albermann K."/>
            <person name="Aldea M."/>
            <person name="Alexandraki D."/>
            <person name="Ansorge W."/>
            <person name="Arino J."/>
            <person name="Benes V."/>
            <person name="Bohn C."/>
            <person name="Bolotin-Fukuhara M."/>
            <person name="Bordonne R."/>
            <person name="Boyer J."/>
            <person name="Camasses A."/>
            <person name="Casamayor A."/>
            <person name="Casas C."/>
            <person name="Cheret G."/>
            <person name="Cziepluch C."/>
            <person name="Daignan-Fornier B."/>
            <person name="Dang V.-D."/>
            <person name="de Haan M."/>
            <person name="Delius H."/>
            <person name="Durand P."/>
            <person name="Fairhead C."/>
            <person name="Feldmann H."/>
            <person name="Gaillon L."/>
            <person name="Galisson F."/>
            <person name="Gamo F.-J."/>
            <person name="Gancedo C."/>
            <person name="Goffeau A."/>
            <person name="Goulding S.E."/>
            <person name="Grivell L.A."/>
            <person name="Habbig B."/>
            <person name="Hand N.J."/>
            <person name="Hani J."/>
            <person name="Hattenhorst U."/>
            <person name="Hebling U."/>
            <person name="Hernando Y."/>
            <person name="Herrero E."/>
            <person name="Heumann K."/>
            <person name="Hiesel R."/>
            <person name="Hilger F."/>
            <person name="Hofmann B."/>
            <person name="Hollenberg C.P."/>
            <person name="Hughes B."/>
            <person name="Jauniaux J.-C."/>
            <person name="Kalogeropoulos A."/>
            <person name="Katsoulou C."/>
            <person name="Kordes E."/>
            <person name="Lafuente M.J."/>
            <person name="Landt O."/>
            <person name="Louis E.J."/>
            <person name="Maarse A.C."/>
            <person name="Madania A."/>
            <person name="Mannhaupt G."/>
            <person name="Marck C."/>
            <person name="Martin R.P."/>
            <person name="Mewes H.-W."/>
            <person name="Michaux G."/>
            <person name="Paces V."/>
            <person name="Parle-McDermott A.G."/>
            <person name="Pearson B.M."/>
            <person name="Perrin A."/>
            <person name="Pettersson B."/>
            <person name="Poch O."/>
            <person name="Pohl T.M."/>
            <person name="Poirey R."/>
            <person name="Portetelle D."/>
            <person name="Pujol A."/>
            <person name="Purnelle B."/>
            <person name="Ramezani Rad M."/>
            <person name="Rechmann S."/>
            <person name="Schwager C."/>
            <person name="Schweizer M."/>
            <person name="Sor F."/>
            <person name="Sterky F."/>
            <person name="Tarassov I.A."/>
            <person name="Teodoru C."/>
            <person name="Tettelin H."/>
            <person name="Thierry A."/>
            <person name="Tobiasch E."/>
            <person name="Tzermia M."/>
            <person name="Uhlen M."/>
            <person name="Unseld M."/>
            <person name="Valens M."/>
            <person name="Vandenbol M."/>
            <person name="Vetter I."/>
            <person name="Vlcek C."/>
            <person name="Voet M."/>
            <person name="Volckaert G."/>
            <person name="Voss H."/>
            <person name="Wambutt R."/>
            <person name="Wedler H."/>
            <person name="Wiemann S."/>
            <person name="Winsor B."/>
            <person name="Wolfe K.H."/>
            <person name="Zollner A."/>
            <person name="Zumstein E."/>
            <person name="Kleine K."/>
        </authorList>
    </citation>
    <scope>NUCLEOTIDE SEQUENCE [LARGE SCALE GENOMIC DNA]</scope>
    <source>
        <strain>ATCC 204508 / S288c</strain>
    </source>
</reference>
<reference key="3">
    <citation type="journal article" date="2014" name="G3 (Bethesda)">
        <title>The reference genome sequence of Saccharomyces cerevisiae: Then and now.</title>
        <authorList>
            <person name="Engel S.R."/>
            <person name="Dietrich F.S."/>
            <person name="Fisk D.G."/>
            <person name="Binkley G."/>
            <person name="Balakrishnan R."/>
            <person name="Costanzo M.C."/>
            <person name="Dwight S.S."/>
            <person name="Hitz B.C."/>
            <person name="Karra K."/>
            <person name="Nash R.S."/>
            <person name="Weng S."/>
            <person name="Wong E.D."/>
            <person name="Lloyd P."/>
            <person name="Skrzypek M.S."/>
            <person name="Miyasato S.R."/>
            <person name="Simison M."/>
            <person name="Cherry J.M."/>
        </authorList>
    </citation>
    <scope>GENOME REANNOTATION</scope>
    <source>
        <strain>ATCC 204508 / S288c</strain>
    </source>
</reference>
<reference key="4">
    <citation type="journal article" date="2001" name="Cell">
        <title>Maturation and intranuclear transport of pre-ribosomes requires Noc proteins.</title>
        <authorList>
            <person name="Milkereit P."/>
            <person name="Gadal O."/>
            <person name="Podtelejnikov A."/>
            <person name="Trumtel S."/>
            <person name="Gas N."/>
            <person name="Petfalski E."/>
            <person name="Tollervey D."/>
            <person name="Mann M."/>
            <person name="Hurt E."/>
            <person name="Tschochner H."/>
        </authorList>
    </citation>
    <scope>FUNCTION</scope>
    <scope>SUBCELLULAR LOCATION</scope>
    <scope>INTERACTION WITH MAK21 AND NOC3</scope>
</reference>
<reference key="5">
    <citation type="journal article" date="2003" name="Nature">
        <title>Global analysis of protein expression in yeast.</title>
        <authorList>
            <person name="Ghaemmaghami S."/>
            <person name="Huh W.-K."/>
            <person name="Bower K."/>
            <person name="Howson R.W."/>
            <person name="Belle A."/>
            <person name="Dephoure N."/>
            <person name="O'Shea E.K."/>
            <person name="Weissman J.S."/>
        </authorList>
    </citation>
    <scope>LEVEL OF PROTEIN EXPRESSION [LARGE SCALE ANALYSIS]</scope>
</reference>
<reference key="6">
    <citation type="journal article" date="2007" name="J. Proteome Res.">
        <title>Large-scale phosphorylation analysis of alpha-factor-arrested Saccharomyces cerevisiae.</title>
        <authorList>
            <person name="Li X."/>
            <person name="Gerber S.A."/>
            <person name="Rudner A.D."/>
            <person name="Beausoleil S.A."/>
            <person name="Haas W."/>
            <person name="Villen J."/>
            <person name="Elias J.E."/>
            <person name="Gygi S.P."/>
        </authorList>
    </citation>
    <scope>PHOSPHORYLATION [LARGE SCALE ANALYSIS] AT SER-70; SER-149; SER-160; SER-166; SER-698 AND SER-708</scope>
    <scope>IDENTIFICATION BY MASS SPECTROMETRY [LARGE SCALE ANALYSIS]</scope>
    <source>
        <strain>ADR376</strain>
    </source>
</reference>
<reference key="7">
    <citation type="journal article" date="2008" name="Mol. Cell. Proteomics">
        <title>A multidimensional chromatography technology for in-depth phosphoproteome analysis.</title>
        <authorList>
            <person name="Albuquerque C.P."/>
            <person name="Smolka M.B."/>
            <person name="Payne S.H."/>
            <person name="Bafna V."/>
            <person name="Eng J."/>
            <person name="Zhou H."/>
        </authorList>
    </citation>
    <scope>PHOSPHORYLATION [LARGE SCALE ANALYSIS] AT SER-70 AND SER-149</scope>
    <scope>IDENTIFICATION BY MASS SPECTROMETRY [LARGE SCALE ANALYSIS]</scope>
</reference>
<reference key="8">
    <citation type="journal article" date="2009" name="Science">
        <title>Global analysis of Cdk1 substrate phosphorylation sites provides insights into evolution.</title>
        <authorList>
            <person name="Holt L.J."/>
            <person name="Tuch B.B."/>
            <person name="Villen J."/>
            <person name="Johnson A.D."/>
            <person name="Gygi S.P."/>
            <person name="Morgan D.O."/>
        </authorList>
    </citation>
    <scope>PHOSPHORYLATION [LARGE SCALE ANALYSIS] AT SER-149; SER-160; SER-698 AND SER-708</scope>
    <scope>IDENTIFICATION BY MASS SPECTROMETRY [LARGE SCALE ANALYSIS]</scope>
</reference>
<sequence length="710" mass="81601">MGKVSKSTKKFQSKHLKHTLDQRRKEKIQKKRIQGRRGNKTDQEKADAAGTREQQQLKKSAKEEVFKDMSVETFFEKGIEIPKENKKLKKKTTKEQSDEDSSSSEEEEDMGQSMAKLAEKDPEFYKYLEENDKDLLDFAGTNPLDGIDSQDEGEDAERNSNIEEKSEQMELEKEKIELSLKLVRKWKKQLHDSPSLKLLRNIISAFKVAVNLNKEENIEDYKYAITDEKAFHELMFMVLKDVPQAIQKMAPYKIVKGARTLPNGGNVSRVSSIVKSHAGSLLILLNDITNTETAALVLHSVNELMPYLLSYRRILKELIKSIVGVWSTTRELETQIASFAFLINTTKEFKKSMLETTLKTTYSTFIKSCRKTNMRSMPLINFQKNSAAELFGIDEVLGYQVGFEYIRQLAIHLRNTMNATTKKSSKINSAEAYKIVYNWQFCHSLDFWSRVLSFACQPEKENGSESPLRQLIYPLVQVTLGVIRLIPTPQFFPLRFYLIKSLIRLSQNSGVFIPIYPLLSEILTSTAFTKAPKKSPNLAAFDFEHNIKCTQAYLNTKIYQEGLSEQFVDLLGDYFALYCKNIAFPELVTPVIISLRRYIKTSTNVKLNKRLSTVVEKLNQNSTFIQEKRSDVEFGPTNKSEVSRFLNDVAWNKTPLGSYVAVQREVKEEKARLMRESMEEQDKERETEEAKLLNSLESDDDNEDVEMSDA</sequence>